<dbReference type="EMBL" id="U30332">
    <property type="protein sequence ID" value="AAA73928.1"/>
    <property type="molecule type" value="mRNA"/>
</dbReference>
<dbReference type="RefSeq" id="NP_777246.1">
    <property type="nucleotide sequence ID" value="NM_174821.2"/>
</dbReference>
<dbReference type="SMR" id="P50448"/>
<dbReference type="FunCoup" id="P50448">
    <property type="interactions" value="505"/>
</dbReference>
<dbReference type="MINT" id="P50448"/>
<dbReference type="STRING" id="9913.ENSBTAP00000021638"/>
<dbReference type="MEROPS" id="I04.024"/>
<dbReference type="GlyGen" id="P50448">
    <property type="glycosylation" value="4 sites"/>
</dbReference>
<dbReference type="PaxDb" id="9913-ENSBTAP00000021638"/>
<dbReference type="PeptideAtlas" id="P50448"/>
<dbReference type="GeneID" id="281035"/>
<dbReference type="KEGG" id="bta:281035"/>
<dbReference type="CTD" id="710"/>
<dbReference type="eggNOG" id="KOG2392">
    <property type="taxonomic scope" value="Eukaryota"/>
</dbReference>
<dbReference type="InParanoid" id="P50448"/>
<dbReference type="OrthoDB" id="6433428at2759"/>
<dbReference type="Proteomes" id="UP000009136">
    <property type="component" value="Unplaced"/>
</dbReference>
<dbReference type="GO" id="GO:0005615">
    <property type="term" value="C:extracellular space"/>
    <property type="evidence" value="ECO:0000318"/>
    <property type="project" value="GO_Central"/>
</dbReference>
<dbReference type="GO" id="GO:0004867">
    <property type="term" value="F:serine-type endopeptidase inhibitor activity"/>
    <property type="evidence" value="ECO:0000318"/>
    <property type="project" value="GO_Central"/>
</dbReference>
<dbReference type="GO" id="GO:0007596">
    <property type="term" value="P:blood coagulation"/>
    <property type="evidence" value="ECO:0007669"/>
    <property type="project" value="UniProtKB-KW"/>
</dbReference>
<dbReference type="GO" id="GO:0042730">
    <property type="term" value="P:fibrinolysis"/>
    <property type="evidence" value="ECO:0007669"/>
    <property type="project" value="UniProtKB-KW"/>
</dbReference>
<dbReference type="FunFam" id="3.30.497.10:FF:000013">
    <property type="entry name" value="Serpin family G member 1"/>
    <property type="match status" value="1"/>
</dbReference>
<dbReference type="Gene3D" id="2.30.39.10">
    <property type="entry name" value="Alpha-1-antitrypsin, domain 1"/>
    <property type="match status" value="1"/>
</dbReference>
<dbReference type="Gene3D" id="3.30.497.10">
    <property type="entry name" value="Antithrombin, subunit I, domain 2"/>
    <property type="match status" value="1"/>
</dbReference>
<dbReference type="InterPro" id="IPR023795">
    <property type="entry name" value="Serpin_CS"/>
</dbReference>
<dbReference type="InterPro" id="IPR023796">
    <property type="entry name" value="Serpin_dom"/>
</dbReference>
<dbReference type="InterPro" id="IPR000215">
    <property type="entry name" value="Serpin_fam"/>
</dbReference>
<dbReference type="InterPro" id="IPR036186">
    <property type="entry name" value="Serpin_sf"/>
</dbReference>
<dbReference type="InterPro" id="IPR042178">
    <property type="entry name" value="Serpin_sf_1"/>
</dbReference>
<dbReference type="InterPro" id="IPR042185">
    <property type="entry name" value="Serpin_sf_2"/>
</dbReference>
<dbReference type="PANTHER" id="PTHR11461:SF159">
    <property type="entry name" value="PLASMA PROTEASE C1 INHIBITOR"/>
    <property type="match status" value="1"/>
</dbReference>
<dbReference type="PANTHER" id="PTHR11461">
    <property type="entry name" value="SERINE PROTEASE INHIBITOR, SERPIN"/>
    <property type="match status" value="1"/>
</dbReference>
<dbReference type="Pfam" id="PF00079">
    <property type="entry name" value="Serpin"/>
    <property type="match status" value="1"/>
</dbReference>
<dbReference type="SMART" id="SM00093">
    <property type="entry name" value="SERPIN"/>
    <property type="match status" value="1"/>
</dbReference>
<dbReference type="SUPFAM" id="SSF56574">
    <property type="entry name" value="Serpins"/>
    <property type="match status" value="1"/>
</dbReference>
<dbReference type="PROSITE" id="PS00284">
    <property type="entry name" value="SERPIN"/>
    <property type="match status" value="1"/>
</dbReference>
<keyword id="KW-0094">Blood coagulation</keyword>
<keyword id="KW-0903">Direct protein sequencing</keyword>
<keyword id="KW-1015">Disulfide bond</keyword>
<keyword id="KW-0280">Fibrinolysis</keyword>
<keyword id="KW-0325">Glycoprotein</keyword>
<keyword id="KW-0356">Hemostasis</keyword>
<keyword id="KW-0646">Protease inhibitor</keyword>
<keyword id="KW-1185">Reference proteome</keyword>
<keyword id="KW-0964">Secreted</keyword>
<keyword id="KW-0722">Serine protease inhibitor</keyword>
<keyword id="KW-0732">Signal</keyword>
<evidence type="ECO:0000250" key="1"/>
<evidence type="ECO:0000255" key="2"/>
<evidence type="ECO:0000256" key="3">
    <source>
        <dbReference type="SAM" id="MobiDB-lite"/>
    </source>
</evidence>
<evidence type="ECO:0000269" key="4">
    <source>
    </source>
</evidence>
<evidence type="ECO:0000305" key="5"/>
<feature type="signal peptide" evidence="4">
    <location>
        <begin position="1"/>
        <end position="23"/>
    </location>
</feature>
<feature type="chain" id="PRO_0000032529" description="Factor XIIa inhibitor">
    <location>
        <begin position="24"/>
        <end position="468"/>
    </location>
</feature>
<feature type="region of interest" description="Disordered" evidence="3">
    <location>
        <begin position="27"/>
        <end position="60"/>
    </location>
</feature>
<feature type="site" description="Reactive bond">
    <location>
        <begin position="434"/>
        <end position="435"/>
    </location>
</feature>
<feature type="glycosylation site" description="N-linked (GlcNAc...) asparagine" evidence="2">
    <location>
        <position position="65"/>
    </location>
</feature>
<feature type="glycosylation site" description="N-linked (GlcNAc...) asparagine" evidence="5">
    <location>
        <position position="176"/>
    </location>
</feature>
<feature type="glycosylation site" description="N-linked (GlcNAc...) asparagine" evidence="5">
    <location>
        <position position="227"/>
    </location>
</feature>
<feature type="glycosylation site" description="N-linked (GlcNAc...) asparagine" evidence="5">
    <location>
        <position position="326"/>
    </location>
</feature>
<feature type="disulfide bond" evidence="1">
    <location>
        <begin position="97"/>
        <end position="396"/>
    </location>
</feature>
<feature type="disulfide bond" evidence="1">
    <location>
        <begin position="104"/>
        <end position="179"/>
    </location>
</feature>
<feature type="sequence conflict" description="In Ref. 2; AA sequence." evidence="5" ref="2">
    <original>S</original>
    <variation>R</variation>
    <location>
        <position position="78"/>
    </location>
</feature>
<feature type="sequence conflict" description="In Ref. 2; AA sequence." evidence="5" ref="2">
    <original>PV</original>
    <variation>TL</variation>
    <location>
        <begin position="84"/>
        <end position="85"/>
    </location>
</feature>
<feature type="sequence conflict" description="In Ref. 2; AA sequence." evidence="5" ref="2">
    <original>S</original>
    <variation>I</variation>
    <location>
        <position position="87"/>
    </location>
</feature>
<feature type="sequence conflict" description="In Ref. 2; AA sequence." evidence="5" ref="2">
    <original>T</original>
    <variation>P</variation>
    <location>
        <position position="92"/>
    </location>
</feature>
<feature type="sequence conflict" description="In Ref. 2; AA sequence." evidence="5" ref="2">
    <original>C</original>
    <variation>F</variation>
    <location>
        <position position="97"/>
    </location>
</feature>
<feature type="sequence conflict" description="In Ref. 2; AA sequence." evidence="5" ref="2">
    <original>L</original>
    <variation>V</variation>
    <location>
        <position position="134"/>
    </location>
</feature>
<feature type="sequence conflict" description="In Ref. 2; AA sequence." evidence="5" ref="2">
    <original>L</original>
    <variation>V</variation>
    <location>
        <position position="171"/>
    </location>
</feature>
<feature type="sequence conflict" description="In Ref. 2; AA sequence." evidence="5" ref="2">
    <original>K</original>
    <variation>R</variation>
    <location>
        <position position="207"/>
    </location>
</feature>
<feature type="sequence conflict" description="In Ref. 2; AA sequence." evidence="5" ref="2">
    <original>L</original>
    <variation>N</variation>
    <location>
        <position position="332"/>
    </location>
</feature>
<feature type="sequence conflict" description="In Ref. 2; AA sequence." evidence="5" ref="2">
    <original>T</original>
    <variation>P</variation>
    <location>
        <position position="336"/>
    </location>
</feature>
<feature type="sequence conflict" description="In Ref. 2; AA sequence." evidence="5" ref="2">
    <original>I</original>
    <variation>K</variation>
    <location>
        <position position="409"/>
    </location>
</feature>
<feature type="sequence conflict" description="In Ref. 2; AA sequence." evidence="5" ref="2">
    <original>R</original>
    <variation>P</variation>
    <location>
        <position position="462"/>
    </location>
</feature>
<accession>P50448</accession>
<sequence>MASRLTPLTLLLLLLLAGDRVTSDMIVGPGNLQEGESEGDSQKGGILDGESIQGNEDSPTLPITNLTVVPATVTKPFSQPATEPVQSTIQPTAEPFCLAPVTSCSDSEIRSAEAVLGEALTDFSLRLYQDFSVLKKRETNFIFSPFSIASLLTQILLGAGGETRVSLEHLLSYPQNFSCVHHALRAFMSEGFTSFSQIFHSSDLTIKDTFAEASQRLYGSSPRPLGNDSTASLELINDWVAKKTNLRIRRLLDSLPEDTRLILLNAVALSAKWKIAFDKGRTSTKPFHLKSSAIKVPMMNSKKYPVASFTDRTLNRPGGRLQLSHNLSFVILVPQTVKHHLQDLEQALSTAVFKAVIKKLEMTKFHPTHLTMPRIKVQSSQDMLDYFDFIYDVNLCGLTEDPDVQVSGIRHQATLELTESGVDATAASVVSVARNLLLFEVQQPFLFLLWDQQHKFPVFMGRVYDPKG</sequence>
<name>F12AI_BOVIN</name>
<proteinExistence type="evidence at protein level"/>
<protein>
    <recommendedName>
        <fullName>Factor XIIa inhibitor</fullName>
        <shortName>XIIaINH</shortName>
    </recommendedName>
</protein>
<reference key="1">
    <citation type="submission" date="1995-06" db="EMBL/GenBank/DDBJ databases">
        <authorList>
            <person name="Edmeston J.E."/>
            <person name="Strumpfer A."/>
            <person name="Muldbjerg M."/>
            <person name="Halkier T."/>
            <person name="Macgillivray R.T.A."/>
        </authorList>
    </citation>
    <scope>NUCLEOTIDE SEQUENCE [MRNA]</scope>
    <source>
        <tissue>Liver</tissue>
    </source>
</reference>
<reference key="2">
    <citation type="journal article" date="1993" name="Blood Coagul. Fibrinolysis">
        <title>Bovine factor XIIa inhibitor.</title>
        <authorList>
            <person name="Muldbjerg M."/>
            <person name="Markussen S."/>
            <person name="Magnusson S."/>
            <person name="Halkier T."/>
        </authorList>
    </citation>
    <scope>PARTIAL PROTEIN SEQUENCE</scope>
    <scope>CHARACTERIZATION</scope>
    <source>
        <tissue>Liver</tissue>
    </source>
</reference>
<reference key="3">
    <citation type="journal article" date="1987" name="Biochim. Biophys. Acta">
        <title>Purification of a proteinase inhibitor from bovine serum with C1-inhibitor activity.</title>
        <authorList>
            <person name="van Nostrand W.E."/>
            <person name="Cunningham D.D."/>
        </authorList>
    </citation>
    <scope>PROTEIN SEQUENCE OF 24-33</scope>
    <source>
        <tissue>Serum</tissue>
    </source>
</reference>
<organism>
    <name type="scientific">Bos taurus</name>
    <name type="common">Bovine</name>
    <dbReference type="NCBI Taxonomy" id="9913"/>
    <lineage>
        <taxon>Eukaryota</taxon>
        <taxon>Metazoa</taxon>
        <taxon>Chordata</taxon>
        <taxon>Craniata</taxon>
        <taxon>Vertebrata</taxon>
        <taxon>Euteleostomi</taxon>
        <taxon>Mammalia</taxon>
        <taxon>Eutheria</taxon>
        <taxon>Laurasiatheria</taxon>
        <taxon>Artiodactyla</taxon>
        <taxon>Ruminantia</taxon>
        <taxon>Pecora</taxon>
        <taxon>Bovidae</taxon>
        <taxon>Bovinae</taxon>
        <taxon>Bos</taxon>
    </lineage>
</organism>
<comment type="function">
    <text>May play a potentially crucial role in regulating important physiological pathways including complement activation, blood coagulation, fibrinolysis and the generation of kinins.</text>
</comment>
<comment type="subcellular location">
    <subcellularLocation>
        <location>Secreted</location>
    </subcellularLocation>
</comment>
<comment type="PTM">
    <text>N- and O-glycosylated.</text>
</comment>
<comment type="miscellaneous">
    <text>Could be the ortholog of SERPING1.</text>
</comment>
<comment type="similarity">
    <text evidence="5">Belongs to the serpin family.</text>
</comment>